<keyword id="KW-0004">4Fe-4S</keyword>
<keyword id="KW-0408">Iron</keyword>
<keyword id="KW-0411">Iron-sulfur</keyword>
<keyword id="KW-0479">Metal-binding</keyword>
<keyword id="KW-0489">Methyltransferase</keyword>
<keyword id="KW-0949">S-adenosyl-L-methionine</keyword>
<keyword id="KW-0808">Transferase</keyword>
<name>Y1815_LISIN</name>
<feature type="chain" id="PRO_0000161997" description="Uncharacterized RNA methyltransferase lin1815">
    <location>
        <begin position="1"/>
        <end position="457"/>
    </location>
</feature>
<feature type="domain" description="TRAM" evidence="2">
    <location>
        <begin position="5"/>
        <end position="63"/>
    </location>
</feature>
<feature type="active site" description="Nucleophile" evidence="3">
    <location>
        <position position="415"/>
    </location>
</feature>
<feature type="binding site" evidence="1">
    <location>
        <position position="76"/>
    </location>
    <ligand>
        <name>[4Fe-4S] cluster</name>
        <dbReference type="ChEBI" id="CHEBI:49883"/>
    </ligand>
</feature>
<feature type="binding site" evidence="1">
    <location>
        <position position="82"/>
    </location>
    <ligand>
        <name>[4Fe-4S] cluster</name>
        <dbReference type="ChEBI" id="CHEBI:49883"/>
    </ligand>
</feature>
<feature type="binding site" evidence="1">
    <location>
        <position position="85"/>
    </location>
    <ligand>
        <name>[4Fe-4S] cluster</name>
        <dbReference type="ChEBI" id="CHEBI:49883"/>
    </ligand>
</feature>
<feature type="binding site" evidence="1">
    <location>
        <position position="166"/>
    </location>
    <ligand>
        <name>[4Fe-4S] cluster</name>
        <dbReference type="ChEBI" id="CHEBI:49883"/>
    </ligand>
</feature>
<feature type="binding site" evidence="3">
    <location>
        <position position="290"/>
    </location>
    <ligand>
        <name>S-adenosyl-L-methionine</name>
        <dbReference type="ChEBI" id="CHEBI:59789"/>
    </ligand>
</feature>
<feature type="binding site" evidence="3">
    <location>
        <position position="319"/>
    </location>
    <ligand>
        <name>S-adenosyl-L-methionine</name>
        <dbReference type="ChEBI" id="CHEBI:59789"/>
    </ligand>
</feature>
<feature type="binding site" evidence="3">
    <location>
        <position position="340"/>
    </location>
    <ligand>
        <name>S-adenosyl-L-methionine</name>
        <dbReference type="ChEBI" id="CHEBI:59789"/>
    </ligand>
</feature>
<feature type="binding site" evidence="3">
    <location>
        <position position="388"/>
    </location>
    <ligand>
        <name>S-adenosyl-L-methionine</name>
        <dbReference type="ChEBI" id="CHEBI:59789"/>
    </ligand>
</feature>
<gene>
    <name type="ordered locus">lin1815</name>
</gene>
<accession>Q92AV4</accession>
<dbReference type="EC" id="2.1.1.-"/>
<dbReference type="EMBL" id="AL596170">
    <property type="protein sequence ID" value="CAC97046.1"/>
    <property type="molecule type" value="Genomic_DNA"/>
</dbReference>
<dbReference type="PIR" id="AF1659">
    <property type="entry name" value="AF1659"/>
</dbReference>
<dbReference type="RefSeq" id="WP_010990968.1">
    <property type="nucleotide sequence ID" value="NC_003212.1"/>
</dbReference>
<dbReference type="SMR" id="Q92AV4"/>
<dbReference type="STRING" id="272626.gene:17566170"/>
<dbReference type="DNASU" id="1130490"/>
<dbReference type="KEGG" id="lin:lin1815"/>
<dbReference type="eggNOG" id="COG2265">
    <property type="taxonomic scope" value="Bacteria"/>
</dbReference>
<dbReference type="HOGENOM" id="CLU_014689_7_1_9"/>
<dbReference type="OrthoDB" id="9804590at2"/>
<dbReference type="Proteomes" id="UP000002513">
    <property type="component" value="Chromosome"/>
</dbReference>
<dbReference type="GO" id="GO:0051539">
    <property type="term" value="F:4 iron, 4 sulfur cluster binding"/>
    <property type="evidence" value="ECO:0007669"/>
    <property type="project" value="UniProtKB-KW"/>
</dbReference>
<dbReference type="GO" id="GO:0046872">
    <property type="term" value="F:metal ion binding"/>
    <property type="evidence" value="ECO:0007669"/>
    <property type="project" value="UniProtKB-KW"/>
</dbReference>
<dbReference type="GO" id="GO:0070041">
    <property type="term" value="F:rRNA (uridine-C5-)-methyltransferase activity"/>
    <property type="evidence" value="ECO:0007669"/>
    <property type="project" value="TreeGrafter"/>
</dbReference>
<dbReference type="GO" id="GO:0070475">
    <property type="term" value="P:rRNA base methylation"/>
    <property type="evidence" value="ECO:0007669"/>
    <property type="project" value="TreeGrafter"/>
</dbReference>
<dbReference type="CDD" id="cd02440">
    <property type="entry name" value="AdoMet_MTases"/>
    <property type="match status" value="1"/>
</dbReference>
<dbReference type="FunFam" id="3.40.50.150:FF:000009">
    <property type="entry name" value="23S rRNA (Uracil(1939)-C(5))-methyltransferase RlmD"/>
    <property type="match status" value="1"/>
</dbReference>
<dbReference type="FunFam" id="2.40.50.140:FF:000097">
    <property type="entry name" value="23S rRNA (uracil(1939)-C(5))-methyltransferase RlmD"/>
    <property type="match status" value="1"/>
</dbReference>
<dbReference type="FunFam" id="2.40.50.1070:FF:000003">
    <property type="entry name" value="23S rRNA (Uracil-5-)-methyltransferase RumA"/>
    <property type="match status" value="1"/>
</dbReference>
<dbReference type="Gene3D" id="2.40.50.1070">
    <property type="match status" value="1"/>
</dbReference>
<dbReference type="Gene3D" id="2.40.50.140">
    <property type="entry name" value="Nucleic acid-binding proteins"/>
    <property type="match status" value="1"/>
</dbReference>
<dbReference type="Gene3D" id="3.40.50.150">
    <property type="entry name" value="Vaccinia Virus protein VP39"/>
    <property type="match status" value="1"/>
</dbReference>
<dbReference type="InterPro" id="IPR030390">
    <property type="entry name" value="MeTrfase_TrmA_AS"/>
</dbReference>
<dbReference type="InterPro" id="IPR030391">
    <property type="entry name" value="MeTrfase_TrmA_CS"/>
</dbReference>
<dbReference type="InterPro" id="IPR012340">
    <property type="entry name" value="NA-bd_OB-fold"/>
</dbReference>
<dbReference type="InterPro" id="IPR029063">
    <property type="entry name" value="SAM-dependent_MTases_sf"/>
</dbReference>
<dbReference type="InterPro" id="IPR002792">
    <property type="entry name" value="TRAM_dom"/>
</dbReference>
<dbReference type="InterPro" id="IPR010280">
    <property type="entry name" value="U5_MeTrfase_fam"/>
</dbReference>
<dbReference type="NCBIfam" id="TIGR00479">
    <property type="entry name" value="rumA"/>
    <property type="match status" value="1"/>
</dbReference>
<dbReference type="PANTHER" id="PTHR11061:SF45">
    <property type="match status" value="1"/>
</dbReference>
<dbReference type="PANTHER" id="PTHR11061">
    <property type="entry name" value="RNA M5U METHYLTRANSFERASE"/>
    <property type="match status" value="1"/>
</dbReference>
<dbReference type="Pfam" id="PF01938">
    <property type="entry name" value="TRAM"/>
    <property type="match status" value="1"/>
</dbReference>
<dbReference type="Pfam" id="PF05958">
    <property type="entry name" value="tRNA_U5-meth_tr"/>
    <property type="match status" value="1"/>
</dbReference>
<dbReference type="SUPFAM" id="SSF50249">
    <property type="entry name" value="Nucleic acid-binding proteins"/>
    <property type="match status" value="1"/>
</dbReference>
<dbReference type="SUPFAM" id="SSF53335">
    <property type="entry name" value="S-adenosyl-L-methionine-dependent methyltransferases"/>
    <property type="match status" value="1"/>
</dbReference>
<dbReference type="PROSITE" id="PS51687">
    <property type="entry name" value="SAM_MT_RNA_M5U"/>
    <property type="match status" value="1"/>
</dbReference>
<dbReference type="PROSITE" id="PS50926">
    <property type="entry name" value="TRAM"/>
    <property type="match status" value="1"/>
</dbReference>
<dbReference type="PROSITE" id="PS01230">
    <property type="entry name" value="TRMA_1"/>
    <property type="match status" value="1"/>
</dbReference>
<dbReference type="PROSITE" id="PS01231">
    <property type="entry name" value="TRMA_2"/>
    <property type="match status" value="1"/>
</dbReference>
<proteinExistence type="inferred from homology"/>
<organism>
    <name type="scientific">Listeria innocua serovar 6a (strain ATCC BAA-680 / CLIP 11262)</name>
    <dbReference type="NCBI Taxonomy" id="272626"/>
    <lineage>
        <taxon>Bacteria</taxon>
        <taxon>Bacillati</taxon>
        <taxon>Bacillota</taxon>
        <taxon>Bacilli</taxon>
        <taxon>Bacillales</taxon>
        <taxon>Listeriaceae</taxon>
        <taxon>Listeria</taxon>
    </lineage>
</organism>
<sequence length="457" mass="51137">MNQNPVEEGQKFPLTIRRMGINGEGIGYFKKAVVFVPGAITGEEVVVEAVKVRDRFTEAKLNKIRKKSPNRVTAPCPVYEACGGCQLQHVAYNAQLELKRDIVIQSIEKHTKIDPAKLKIRPTIGMEDPWRYRNKSQFQTRMVGSGQVETGLFGANSHQLVPIEDCIVQQPVTIKVTNFVRDLLEKYGVPIYDEKAGSGIIRTIVVRTGVKTGETQLVFITNSKKLPKKREMLAEIEAALPEVTSIMQNVNQAKSSLIFGDETFLLAGKESIEEKLMELEFDLSARAFFQLNPFQTERLYQEVEKALVLTGSETLVDAYCGVGTIGQAFAGKVKEVRGMDIIPESIEDAKRNAEKNGIDNVYYEVGKAEDVLPKWVKEGFRPDAVIVDPPRSGCDQGLIKSLLQVEAKQLVYVSCNPSTLARDLALLAKKYQIRYMQPVDMFPQTAHVETVTLLQRR</sequence>
<reference key="1">
    <citation type="journal article" date="2001" name="Science">
        <title>Comparative genomics of Listeria species.</title>
        <authorList>
            <person name="Glaser P."/>
            <person name="Frangeul L."/>
            <person name="Buchrieser C."/>
            <person name="Rusniok C."/>
            <person name="Amend A."/>
            <person name="Baquero F."/>
            <person name="Berche P."/>
            <person name="Bloecker H."/>
            <person name="Brandt P."/>
            <person name="Chakraborty T."/>
            <person name="Charbit A."/>
            <person name="Chetouani F."/>
            <person name="Couve E."/>
            <person name="de Daruvar A."/>
            <person name="Dehoux P."/>
            <person name="Domann E."/>
            <person name="Dominguez-Bernal G."/>
            <person name="Duchaud E."/>
            <person name="Durant L."/>
            <person name="Dussurget O."/>
            <person name="Entian K.-D."/>
            <person name="Fsihi H."/>
            <person name="Garcia-del Portillo F."/>
            <person name="Garrido P."/>
            <person name="Gautier L."/>
            <person name="Goebel W."/>
            <person name="Gomez-Lopez N."/>
            <person name="Hain T."/>
            <person name="Hauf J."/>
            <person name="Jackson D."/>
            <person name="Jones L.-M."/>
            <person name="Kaerst U."/>
            <person name="Kreft J."/>
            <person name="Kuhn M."/>
            <person name="Kunst F."/>
            <person name="Kurapkat G."/>
            <person name="Madueno E."/>
            <person name="Maitournam A."/>
            <person name="Mata Vicente J."/>
            <person name="Ng E."/>
            <person name="Nedjari H."/>
            <person name="Nordsiek G."/>
            <person name="Novella S."/>
            <person name="de Pablos B."/>
            <person name="Perez-Diaz J.-C."/>
            <person name="Purcell R."/>
            <person name="Remmel B."/>
            <person name="Rose M."/>
            <person name="Schlueter T."/>
            <person name="Simoes N."/>
            <person name="Tierrez A."/>
            <person name="Vazquez-Boland J.-A."/>
            <person name="Voss H."/>
            <person name="Wehland J."/>
            <person name="Cossart P."/>
        </authorList>
    </citation>
    <scope>NUCLEOTIDE SEQUENCE [LARGE SCALE GENOMIC DNA]</scope>
    <source>
        <strain>ATCC BAA-680 / CLIP 11262</strain>
    </source>
</reference>
<protein>
    <recommendedName>
        <fullName>Uncharacterized RNA methyltransferase lin1815</fullName>
        <ecNumber>2.1.1.-</ecNumber>
    </recommendedName>
</protein>
<evidence type="ECO:0000250" key="1"/>
<evidence type="ECO:0000255" key="2">
    <source>
        <dbReference type="PROSITE-ProRule" id="PRU00208"/>
    </source>
</evidence>
<evidence type="ECO:0000255" key="3">
    <source>
        <dbReference type="PROSITE-ProRule" id="PRU01024"/>
    </source>
</evidence>
<comment type="similarity">
    <text evidence="3">Belongs to the class I-like SAM-binding methyltransferase superfamily. RNA M5U methyltransferase family.</text>
</comment>